<evidence type="ECO:0000255" key="1">
    <source>
        <dbReference type="HAMAP-Rule" id="MF_00259"/>
    </source>
</evidence>
<name>GCST_BORPE</name>
<proteinExistence type="inferred from homology"/>
<sequence>MSAPLKRTPLAEEHLAAGACMVDFGGWDMPLAYGSQLEEHHAVRQDAGMFDVSHMLNVDVGGADATAFLRRLVANDVARLATPGKALYSCMLNPQGGIIDDLIIYYFAPDQWRVVVNAGTADKDIAWMQRVAAADGFDVVIAPRRDLAMVAVQGPNARAKVWAARPAWQAASEPLAPFSAAAVEAGTLVARTGYTGEDGFEIVLPADAVVQLWRDLLAQGVRPCGLGARDTLRLEAGMNLYGQDMDELVHPDQAGLSWTVALKDEARRFVGRDAIEQFAVPRAFVGLKLQERGVMRAHMPVRCAQGMGELTSGTMSPTLGVSVGFARMPVGVQPGDAVEVEIRGKWVPALVCKLPFVRHGKAVEHS</sequence>
<reference key="1">
    <citation type="journal article" date="2003" name="Nat. Genet.">
        <title>Comparative analysis of the genome sequences of Bordetella pertussis, Bordetella parapertussis and Bordetella bronchiseptica.</title>
        <authorList>
            <person name="Parkhill J."/>
            <person name="Sebaihia M."/>
            <person name="Preston A."/>
            <person name="Murphy L.D."/>
            <person name="Thomson N.R."/>
            <person name="Harris D.E."/>
            <person name="Holden M.T.G."/>
            <person name="Churcher C.M."/>
            <person name="Bentley S.D."/>
            <person name="Mungall K.L."/>
            <person name="Cerdeno-Tarraga A.-M."/>
            <person name="Temple L."/>
            <person name="James K.D."/>
            <person name="Harris B."/>
            <person name="Quail M.A."/>
            <person name="Achtman M."/>
            <person name="Atkin R."/>
            <person name="Baker S."/>
            <person name="Basham D."/>
            <person name="Bason N."/>
            <person name="Cherevach I."/>
            <person name="Chillingworth T."/>
            <person name="Collins M."/>
            <person name="Cronin A."/>
            <person name="Davis P."/>
            <person name="Doggett J."/>
            <person name="Feltwell T."/>
            <person name="Goble A."/>
            <person name="Hamlin N."/>
            <person name="Hauser H."/>
            <person name="Holroyd S."/>
            <person name="Jagels K."/>
            <person name="Leather S."/>
            <person name="Moule S."/>
            <person name="Norberczak H."/>
            <person name="O'Neil S."/>
            <person name="Ormond D."/>
            <person name="Price C."/>
            <person name="Rabbinowitsch E."/>
            <person name="Rutter S."/>
            <person name="Sanders M."/>
            <person name="Saunders D."/>
            <person name="Seeger K."/>
            <person name="Sharp S."/>
            <person name="Simmonds M."/>
            <person name="Skelton J."/>
            <person name="Squares R."/>
            <person name="Squares S."/>
            <person name="Stevens K."/>
            <person name="Unwin L."/>
            <person name="Whitehead S."/>
            <person name="Barrell B.G."/>
            <person name="Maskell D.J."/>
        </authorList>
    </citation>
    <scope>NUCLEOTIDE SEQUENCE [LARGE SCALE GENOMIC DNA]</scope>
    <source>
        <strain>Tohama I / ATCC BAA-589 / NCTC 13251</strain>
    </source>
</reference>
<keyword id="KW-0032">Aminotransferase</keyword>
<keyword id="KW-1185">Reference proteome</keyword>
<keyword id="KW-0808">Transferase</keyword>
<accession>Q7W0E5</accession>
<protein>
    <recommendedName>
        <fullName evidence="1">Aminomethyltransferase</fullName>
        <ecNumber evidence="1">2.1.2.10</ecNumber>
    </recommendedName>
    <alternativeName>
        <fullName evidence="1">Glycine cleavage system T protein</fullName>
    </alternativeName>
</protein>
<comment type="function">
    <text evidence="1">The glycine cleavage system catalyzes the degradation of glycine.</text>
</comment>
<comment type="catalytic activity">
    <reaction evidence="1">
        <text>N(6)-[(R)-S(8)-aminomethyldihydrolipoyl]-L-lysyl-[protein] + (6S)-5,6,7,8-tetrahydrofolate = N(6)-[(R)-dihydrolipoyl]-L-lysyl-[protein] + (6R)-5,10-methylene-5,6,7,8-tetrahydrofolate + NH4(+)</text>
        <dbReference type="Rhea" id="RHEA:16945"/>
        <dbReference type="Rhea" id="RHEA-COMP:10475"/>
        <dbReference type="Rhea" id="RHEA-COMP:10492"/>
        <dbReference type="ChEBI" id="CHEBI:15636"/>
        <dbReference type="ChEBI" id="CHEBI:28938"/>
        <dbReference type="ChEBI" id="CHEBI:57453"/>
        <dbReference type="ChEBI" id="CHEBI:83100"/>
        <dbReference type="ChEBI" id="CHEBI:83143"/>
        <dbReference type="EC" id="2.1.2.10"/>
    </reaction>
</comment>
<comment type="subunit">
    <text evidence="1">The glycine cleavage system is composed of four proteins: P, T, L and H.</text>
</comment>
<comment type="similarity">
    <text evidence="1">Belongs to the GcvT family.</text>
</comment>
<feature type="chain" id="PRO_0000122548" description="Aminomethyltransferase">
    <location>
        <begin position="1"/>
        <end position="366"/>
    </location>
</feature>
<organism>
    <name type="scientific">Bordetella pertussis (strain Tohama I / ATCC BAA-589 / NCTC 13251)</name>
    <dbReference type="NCBI Taxonomy" id="257313"/>
    <lineage>
        <taxon>Bacteria</taxon>
        <taxon>Pseudomonadati</taxon>
        <taxon>Pseudomonadota</taxon>
        <taxon>Betaproteobacteria</taxon>
        <taxon>Burkholderiales</taxon>
        <taxon>Alcaligenaceae</taxon>
        <taxon>Bordetella</taxon>
    </lineage>
</organism>
<dbReference type="EC" id="2.1.2.10" evidence="1"/>
<dbReference type="EMBL" id="BX640411">
    <property type="protein sequence ID" value="CAE40574.1"/>
    <property type="molecule type" value="Genomic_DNA"/>
</dbReference>
<dbReference type="RefSeq" id="NP_879084.1">
    <property type="nucleotide sequence ID" value="NC_002929.2"/>
</dbReference>
<dbReference type="RefSeq" id="WP_010929675.1">
    <property type="nucleotide sequence ID" value="NZ_CP039022.1"/>
</dbReference>
<dbReference type="SMR" id="Q7W0E5"/>
<dbReference type="STRING" id="257313.BP0195"/>
<dbReference type="PaxDb" id="257313-BP0195"/>
<dbReference type="GeneID" id="69603548"/>
<dbReference type="KEGG" id="bpe:BP0195"/>
<dbReference type="PATRIC" id="fig|257313.5.peg.206"/>
<dbReference type="eggNOG" id="COG0404">
    <property type="taxonomic scope" value="Bacteria"/>
</dbReference>
<dbReference type="HOGENOM" id="CLU_007884_10_2_4"/>
<dbReference type="Proteomes" id="UP000002676">
    <property type="component" value="Chromosome"/>
</dbReference>
<dbReference type="GO" id="GO:0005829">
    <property type="term" value="C:cytosol"/>
    <property type="evidence" value="ECO:0007669"/>
    <property type="project" value="TreeGrafter"/>
</dbReference>
<dbReference type="GO" id="GO:0005960">
    <property type="term" value="C:glycine cleavage complex"/>
    <property type="evidence" value="ECO:0007669"/>
    <property type="project" value="InterPro"/>
</dbReference>
<dbReference type="GO" id="GO:0004047">
    <property type="term" value="F:aminomethyltransferase activity"/>
    <property type="evidence" value="ECO:0007669"/>
    <property type="project" value="UniProtKB-UniRule"/>
</dbReference>
<dbReference type="GO" id="GO:0008483">
    <property type="term" value="F:transaminase activity"/>
    <property type="evidence" value="ECO:0007669"/>
    <property type="project" value="UniProtKB-KW"/>
</dbReference>
<dbReference type="GO" id="GO:0019464">
    <property type="term" value="P:glycine decarboxylation via glycine cleavage system"/>
    <property type="evidence" value="ECO:0007669"/>
    <property type="project" value="UniProtKB-UniRule"/>
</dbReference>
<dbReference type="FunFam" id="3.30.70.1400:FF:000001">
    <property type="entry name" value="Aminomethyltransferase"/>
    <property type="match status" value="1"/>
</dbReference>
<dbReference type="Gene3D" id="2.40.30.110">
    <property type="entry name" value="Aminomethyltransferase beta-barrel domains"/>
    <property type="match status" value="1"/>
</dbReference>
<dbReference type="Gene3D" id="3.30.70.1400">
    <property type="entry name" value="Aminomethyltransferase beta-barrel domains"/>
    <property type="match status" value="1"/>
</dbReference>
<dbReference type="Gene3D" id="4.10.1250.10">
    <property type="entry name" value="Aminomethyltransferase fragment"/>
    <property type="match status" value="1"/>
</dbReference>
<dbReference type="Gene3D" id="3.30.1360.120">
    <property type="entry name" value="Probable tRNA modification gtpase trme, domain 1"/>
    <property type="match status" value="1"/>
</dbReference>
<dbReference type="HAMAP" id="MF_00259">
    <property type="entry name" value="GcvT"/>
    <property type="match status" value="1"/>
</dbReference>
<dbReference type="InterPro" id="IPR006223">
    <property type="entry name" value="GCS_T"/>
</dbReference>
<dbReference type="InterPro" id="IPR022903">
    <property type="entry name" value="GCS_T_bac"/>
</dbReference>
<dbReference type="InterPro" id="IPR013977">
    <property type="entry name" value="GCST_C"/>
</dbReference>
<dbReference type="InterPro" id="IPR006222">
    <property type="entry name" value="GCV_T_N"/>
</dbReference>
<dbReference type="InterPro" id="IPR028896">
    <property type="entry name" value="GcvT/YgfZ/DmdA"/>
</dbReference>
<dbReference type="InterPro" id="IPR029043">
    <property type="entry name" value="GcvT/YgfZ_C"/>
</dbReference>
<dbReference type="InterPro" id="IPR027266">
    <property type="entry name" value="TrmE/GcvT_dom1"/>
</dbReference>
<dbReference type="NCBIfam" id="TIGR00528">
    <property type="entry name" value="gcvT"/>
    <property type="match status" value="1"/>
</dbReference>
<dbReference type="NCBIfam" id="NF001567">
    <property type="entry name" value="PRK00389.1"/>
    <property type="match status" value="1"/>
</dbReference>
<dbReference type="PANTHER" id="PTHR43757">
    <property type="entry name" value="AMINOMETHYLTRANSFERASE"/>
    <property type="match status" value="1"/>
</dbReference>
<dbReference type="PANTHER" id="PTHR43757:SF2">
    <property type="entry name" value="AMINOMETHYLTRANSFERASE, MITOCHONDRIAL"/>
    <property type="match status" value="1"/>
</dbReference>
<dbReference type="Pfam" id="PF01571">
    <property type="entry name" value="GCV_T"/>
    <property type="match status" value="1"/>
</dbReference>
<dbReference type="Pfam" id="PF08669">
    <property type="entry name" value="GCV_T_C"/>
    <property type="match status" value="1"/>
</dbReference>
<dbReference type="PIRSF" id="PIRSF006487">
    <property type="entry name" value="GcvT"/>
    <property type="match status" value="1"/>
</dbReference>
<dbReference type="SUPFAM" id="SSF101790">
    <property type="entry name" value="Aminomethyltransferase beta-barrel domain"/>
    <property type="match status" value="1"/>
</dbReference>
<dbReference type="SUPFAM" id="SSF103025">
    <property type="entry name" value="Folate-binding domain"/>
    <property type="match status" value="1"/>
</dbReference>
<gene>
    <name evidence="1" type="primary">gcvT</name>
    <name type="ordered locus">BP0195</name>
</gene>